<gene>
    <name type="primary">ddo-2</name>
    <name type="ORF">F18E3.7</name>
</gene>
<keyword id="KW-0025">Alternative splicing</keyword>
<keyword id="KW-0963">Cytoplasm</keyword>
<keyword id="KW-0274">FAD</keyword>
<keyword id="KW-0285">Flavoprotein</keyword>
<keyword id="KW-0560">Oxidoreductase</keyword>
<keyword id="KW-1185">Reference proteome</keyword>
<accession>Q19564</accession>
<accession>Q08I99</accession>
<accession>Q8I7K8</accession>
<protein>
    <recommendedName>
        <fullName>D-aspartate oxidase 2</fullName>
        <shortName>DASOX 2</shortName>
        <shortName evidence="6">DASPO 2</shortName>
        <shortName>DDO-2</shortName>
        <ecNumber evidence="3 4">1.4.3.1</ecNumber>
    </recommendedName>
</protein>
<reference key="1">
    <citation type="journal article" date="2007" name="FEBS J.">
        <title>Caenorhabditis elegans has two genes encoding functional D-aspartate oxidases.</title>
        <authorList>
            <person name="Katane M."/>
            <person name="Seida Y."/>
            <person name="Sekine M."/>
            <person name="Furuchi T."/>
            <person name="Homma H."/>
        </authorList>
    </citation>
    <scope>NUCLEOTIDE SEQUENCE [MRNA] (ISOFORM A)</scope>
    <scope>FUNCTION</scope>
    <scope>BIOPHYSICOCHEMICAL PROPERTIES</scope>
    <source>
        <strain>Bristol N2</strain>
    </source>
</reference>
<reference key="2">
    <citation type="journal article" date="1998" name="Science">
        <title>Genome sequence of the nematode C. elegans: a platform for investigating biology.</title>
        <authorList>
            <consortium name="The C. elegans sequencing consortium"/>
        </authorList>
    </citation>
    <scope>NUCLEOTIDE SEQUENCE [LARGE SCALE GENOMIC DNA]</scope>
    <scope>ALTERNATIVE SPLICING</scope>
    <source>
        <strain>Bristol N2</strain>
    </source>
</reference>
<reference key="3">
    <citation type="journal article" date="2010" name="Biochimie">
        <title>Thiolactomycin inhibits D-aspartate oxidase: a novel approach to probing the active site environment.</title>
        <authorList>
            <person name="Katane M."/>
            <person name="Saitoh Y."/>
            <person name="Hanai T."/>
            <person name="Sekine M."/>
            <person name="Furuchi T."/>
            <person name="Koyama N."/>
            <person name="Nakagome I."/>
            <person name="Tomoda H."/>
            <person name="Hirono S."/>
            <person name="Homma H."/>
        </authorList>
    </citation>
    <scope>FUNCTION</scope>
    <scope>CATALYTIC ACTIVITY</scope>
    <scope>ACTIVITY REGULATION</scope>
</reference>
<reference key="4">
    <citation type="journal article" date="2010" name="Chem. Biodivers.">
        <title>Comparative characterization of three D-aspartate oxidases and one D-amino acid oxidase from Caenorhabditis elegans.</title>
        <authorList>
            <person name="Katane M."/>
            <person name="Saitoh Y."/>
            <person name="Seida Y."/>
            <person name="Sekine M."/>
            <person name="Furuchi T."/>
            <person name="Homma H."/>
        </authorList>
    </citation>
    <scope>FUNCTION</scope>
    <scope>CATALYTIC ACTIVITY</scope>
    <scope>SUBSTRATE SPECIFICITY</scope>
    <scope>STEREOSPECIFICITY</scope>
    <scope>COFACTOR</scope>
    <scope>BIOPHYSICOCHEMICAL PROPERTIES</scope>
</reference>
<reference key="5">
    <citation type="journal article" date="2012" name="Mol. Cell. Biol.">
        <title>Spatiotemporal localization of D-amino acid oxidase and D-aspartate oxidases during development in Caenorhabditis elegans.</title>
        <authorList>
            <person name="Saitoh Y."/>
            <person name="Katane M."/>
            <person name="Kawata T."/>
            <person name="Maeda K."/>
            <person name="Sekine M."/>
            <person name="Furuchi T."/>
            <person name="Kobuna H."/>
            <person name="Sakamoto T."/>
            <person name="Inoue T."/>
            <person name="Arai H."/>
            <person name="Nakagawa Y."/>
            <person name="Homma H."/>
        </authorList>
    </citation>
    <scope>FUNCTION</scope>
    <scope>TISSUE SPECIFICITY</scope>
    <scope>DEVELOPMENTAL STAGE</scope>
    <scope>DISRUPTION PHENOTYPE</scope>
    <source>
        <strain>Bristol N2</strain>
    </source>
</reference>
<feature type="chain" id="PRO_0000162772" description="D-aspartate oxidase 2">
    <location>
        <begin position="1"/>
        <end position="334"/>
    </location>
</feature>
<feature type="binding site" evidence="1">
    <location>
        <position position="38"/>
    </location>
    <ligand>
        <name>FAD</name>
        <dbReference type="ChEBI" id="CHEBI:57692"/>
    </ligand>
</feature>
<feature type="binding site" evidence="1">
    <location>
        <position position="39"/>
    </location>
    <ligand>
        <name>FAD</name>
        <dbReference type="ChEBI" id="CHEBI:57692"/>
    </ligand>
</feature>
<feature type="binding site" evidence="1">
    <location>
        <position position="46"/>
    </location>
    <ligand>
        <name>FAD</name>
        <dbReference type="ChEBI" id="CHEBI:57692"/>
    </ligand>
</feature>
<feature type="binding site" evidence="1">
    <location>
        <position position="310"/>
    </location>
    <ligand>
        <name>FAD</name>
        <dbReference type="ChEBI" id="CHEBI:57692"/>
    </ligand>
</feature>
<feature type="binding site" evidence="1">
    <location>
        <position position="315"/>
    </location>
    <ligand>
        <name>FAD</name>
        <dbReference type="ChEBI" id="CHEBI:57692"/>
    </ligand>
</feature>
<feature type="splice variant" id="VSP_014356" description="In isoform b." evidence="6">
    <location>
        <begin position="1"/>
        <end position="222"/>
    </location>
</feature>
<feature type="splice variant" id="VSP_014357" description="In isoform b." evidence="6">
    <original>TFTIPK</original>
    <variation>MCQIFR</variation>
    <location>
        <begin position="223"/>
        <end position="228"/>
    </location>
</feature>
<feature type="splice variant" id="VSP_014358" description="In isoform b." evidence="6">
    <original>EPKIIK</original>
    <variation>VRISFF</variation>
    <location>
        <begin position="268"/>
        <end position="273"/>
    </location>
</feature>
<feature type="splice variant" id="VSP_014359" description="In isoform b." evidence="6">
    <location>
        <begin position="274"/>
        <end position="334"/>
    </location>
</feature>
<dbReference type="EC" id="1.4.3.1" evidence="3 4"/>
<dbReference type="EMBL" id="AB275892">
    <property type="protein sequence ID" value="BAF34315.1"/>
    <property type="molecule type" value="mRNA"/>
</dbReference>
<dbReference type="EMBL" id="FO081172">
    <property type="protein sequence ID" value="CCD69662.1"/>
    <property type="molecule type" value="Genomic_DNA"/>
</dbReference>
<dbReference type="EMBL" id="FO081172">
    <property type="protein sequence ID" value="CCD69663.1"/>
    <property type="molecule type" value="Genomic_DNA"/>
</dbReference>
<dbReference type="PIR" id="T29219">
    <property type="entry name" value="T29219"/>
</dbReference>
<dbReference type="RefSeq" id="NP_001370668.1">
    <molecule id="Q19564-1"/>
    <property type="nucleotide sequence ID" value="NM_001383337.2"/>
</dbReference>
<dbReference type="RefSeq" id="NP_504908.1">
    <property type="nucleotide sequence ID" value="NM_072507.4"/>
</dbReference>
<dbReference type="SMR" id="Q19564"/>
<dbReference type="BioGRID" id="44175">
    <property type="interactions" value="23"/>
</dbReference>
<dbReference type="FunCoup" id="Q19564">
    <property type="interactions" value="1"/>
</dbReference>
<dbReference type="STRING" id="6239.F18E3.7a.2"/>
<dbReference type="BindingDB" id="Q19564"/>
<dbReference type="ChEMBL" id="CHEMBL3351209"/>
<dbReference type="PaxDb" id="6239-F18E3.7a"/>
<dbReference type="PeptideAtlas" id="Q19564"/>
<dbReference type="EnsemblMetazoa" id="F18E3.7a.1">
    <molecule id="Q19564-1"/>
    <property type="protein sequence ID" value="F18E3.7a.1"/>
    <property type="gene ID" value="WBGene00017565"/>
</dbReference>
<dbReference type="EnsemblMetazoa" id="F18E3.7a.2">
    <molecule id="Q19564-1"/>
    <property type="protein sequence ID" value="F18E3.7a.2"/>
    <property type="gene ID" value="WBGene00017565"/>
</dbReference>
<dbReference type="GeneID" id="179130"/>
<dbReference type="UCSC" id="F18E3.7b">
    <molecule id="Q19564-1"/>
    <property type="organism name" value="c. elegans"/>
</dbReference>
<dbReference type="AGR" id="WB:WBGene00017565"/>
<dbReference type="WormBase" id="F18E3.7a">
    <molecule id="Q19564-1"/>
    <property type="protein sequence ID" value="CE07083"/>
    <property type="gene ID" value="WBGene00017565"/>
    <property type="gene designation" value="ddo-2"/>
</dbReference>
<dbReference type="eggNOG" id="KOG3923">
    <property type="taxonomic scope" value="Eukaryota"/>
</dbReference>
<dbReference type="GeneTree" id="ENSGT00390000018635"/>
<dbReference type="HOGENOM" id="CLU_034311_0_2_1"/>
<dbReference type="InParanoid" id="Q19564"/>
<dbReference type="OMA" id="PGMREPK"/>
<dbReference type="OrthoDB" id="2015447at2759"/>
<dbReference type="PhylomeDB" id="Q19564"/>
<dbReference type="BRENDA" id="1.4.3.1">
    <property type="organism ID" value="1045"/>
</dbReference>
<dbReference type="Reactome" id="R-CEL-389661">
    <property type="pathway name" value="Glyoxylate metabolism and glycine degradation"/>
</dbReference>
<dbReference type="Reactome" id="R-CEL-9033241">
    <property type="pathway name" value="Peroxisomal protein import"/>
</dbReference>
<dbReference type="SABIO-RK" id="Q19564"/>
<dbReference type="PRO" id="PR:Q19564"/>
<dbReference type="Proteomes" id="UP000001940">
    <property type="component" value="Chromosome V"/>
</dbReference>
<dbReference type="Bgee" id="WBGene00017565">
    <property type="expression patterns" value="Expressed in larva and 4 other cell types or tissues"/>
</dbReference>
<dbReference type="GO" id="GO:0005737">
    <property type="term" value="C:cytoplasm"/>
    <property type="evidence" value="ECO:0000318"/>
    <property type="project" value="GO_Central"/>
</dbReference>
<dbReference type="GO" id="GO:0005782">
    <property type="term" value="C:peroxisomal matrix"/>
    <property type="evidence" value="ECO:0000250"/>
    <property type="project" value="UniProtKB"/>
</dbReference>
<dbReference type="GO" id="GO:0003884">
    <property type="term" value="F:D-amino-acid oxidase activity"/>
    <property type="evidence" value="ECO:0000318"/>
    <property type="project" value="GO_Central"/>
</dbReference>
<dbReference type="GO" id="GO:0008445">
    <property type="term" value="F:D-aspartate oxidase activity"/>
    <property type="evidence" value="ECO:0000314"/>
    <property type="project" value="UniProtKB"/>
</dbReference>
<dbReference type="GO" id="GO:0047821">
    <property type="term" value="F:D-glutamate oxidase activity"/>
    <property type="evidence" value="ECO:0000314"/>
    <property type="project" value="UniProtKB"/>
</dbReference>
<dbReference type="GO" id="GO:0071949">
    <property type="term" value="F:FAD binding"/>
    <property type="evidence" value="ECO:0000250"/>
    <property type="project" value="UniProtKB"/>
</dbReference>
<dbReference type="GO" id="GO:0006533">
    <property type="term" value="P:aspartate catabolic process"/>
    <property type="evidence" value="ECO:0000314"/>
    <property type="project" value="UniProtKB"/>
</dbReference>
<dbReference type="GO" id="GO:0019478">
    <property type="term" value="P:D-amino acid catabolic process"/>
    <property type="evidence" value="ECO:0000250"/>
    <property type="project" value="UniProtKB"/>
</dbReference>
<dbReference type="Gene3D" id="3.30.9.10">
    <property type="entry name" value="D-Amino Acid Oxidase, subunit A, domain 2"/>
    <property type="match status" value="1"/>
</dbReference>
<dbReference type="Gene3D" id="3.40.50.720">
    <property type="entry name" value="NAD(P)-binding Rossmann-like Domain"/>
    <property type="match status" value="1"/>
</dbReference>
<dbReference type="InterPro" id="IPR006181">
    <property type="entry name" value="D-amino_acid_oxidase_CS"/>
</dbReference>
<dbReference type="InterPro" id="IPR023209">
    <property type="entry name" value="DAO"/>
</dbReference>
<dbReference type="InterPro" id="IPR006076">
    <property type="entry name" value="FAD-dep_OxRdtase"/>
</dbReference>
<dbReference type="PANTHER" id="PTHR11530">
    <property type="entry name" value="D-AMINO ACID OXIDASE"/>
    <property type="match status" value="1"/>
</dbReference>
<dbReference type="PANTHER" id="PTHR11530:SF13">
    <property type="entry name" value="D-ASPARTATE OXIDASE 2"/>
    <property type="match status" value="1"/>
</dbReference>
<dbReference type="Pfam" id="PF01266">
    <property type="entry name" value="DAO"/>
    <property type="match status" value="1"/>
</dbReference>
<dbReference type="SUPFAM" id="SSF54373">
    <property type="entry name" value="FAD-linked reductases, C-terminal domain"/>
    <property type="match status" value="1"/>
</dbReference>
<dbReference type="SUPFAM" id="SSF51971">
    <property type="entry name" value="Nucleotide-binding domain"/>
    <property type="match status" value="1"/>
</dbReference>
<dbReference type="PROSITE" id="PS00677">
    <property type="entry name" value="DAO"/>
    <property type="match status" value="1"/>
</dbReference>
<sequence>MANIIPKIAIIGEGVIGCTSALQISKAIPNAKITVLHDKPFKKSCSAGPAGLFRIDYEENTEYGRASFAWFSHLYRTTKGSETGVKLVSGHIQSDNLESLKQQQRAYGDIVYNFRFLDDRERLDIFPEPSKHCIHYTAYASEGNKYVPYLKNLLLEQKIEFKQQEVTSLDAVADAGYDVIVNCAGLYGGKLAGDDDTCYPIRGVILEVDAPWHKHFNYRDFTTFTIPKEHSVVVGSTKQDNRWDLEITDEDRNDILKRYIALHPGMREPKIIKEWSALRPGRKHVRIEAQKRTSVGNSKDYMVVHHYGHGSNGFTLGWGTAIEATKLVKTALGL</sequence>
<comment type="function">
    <text evidence="2 3 4 5">Selectively catalyzes the oxidative deamination of acidic amino acids (PubMed:17140416, PubMed:20564561, PubMed:20603179). May play a role in the egg-laying events and early development of the worm, in addition to quality control of the germ cells (PubMed:22393259).</text>
</comment>
<comment type="catalytic activity">
    <reaction evidence="3 4">
        <text>D-aspartate + O2 + H2O = oxaloacetate + H2O2 + NH4(+)</text>
        <dbReference type="Rhea" id="RHEA:12512"/>
        <dbReference type="ChEBI" id="CHEBI:15377"/>
        <dbReference type="ChEBI" id="CHEBI:15379"/>
        <dbReference type="ChEBI" id="CHEBI:16240"/>
        <dbReference type="ChEBI" id="CHEBI:16452"/>
        <dbReference type="ChEBI" id="CHEBI:28938"/>
        <dbReference type="ChEBI" id="CHEBI:29990"/>
        <dbReference type="EC" id="1.4.3.1"/>
    </reaction>
    <physiologicalReaction direction="left-to-right" evidence="3 4">
        <dbReference type="Rhea" id="RHEA:12513"/>
    </physiologicalReaction>
</comment>
<comment type="catalytic activity">
    <reaction evidence="2 3">
        <text>D-glutamate + O2 + H2O = H2O2 + 2-oxoglutarate + NH4(+)</text>
        <dbReference type="Rhea" id="RHEA:10028"/>
        <dbReference type="ChEBI" id="CHEBI:15377"/>
        <dbReference type="ChEBI" id="CHEBI:15379"/>
        <dbReference type="ChEBI" id="CHEBI:16240"/>
        <dbReference type="ChEBI" id="CHEBI:16810"/>
        <dbReference type="ChEBI" id="CHEBI:28938"/>
        <dbReference type="ChEBI" id="CHEBI:29986"/>
    </reaction>
    <physiologicalReaction direction="left-to-right" evidence="2 3">
        <dbReference type="Rhea" id="RHEA:10029"/>
    </physiologicalReaction>
</comment>
<comment type="cofactor">
    <cofactor evidence="3">
        <name>FAD</name>
        <dbReference type="ChEBI" id="CHEBI:57692"/>
    </cofactor>
</comment>
<comment type="activity regulation">
    <text evidence="4">Inhibited by thiolactomycin.</text>
</comment>
<comment type="biophysicochemical properties">
    <kinetics>
        <KM evidence="2 3">0.38 mM for D-aspartate</KM>
        <KM evidence="2 3">0.25 mM for D-glutamate</KM>
        <KM evidence="2 3">1.84 mM for N-methyl D-aspartate</KM>
        <KM evidence="2 3">4.2 mM for D-aspartate</KM>
        <KM evidence="2 3">0.8 mM for D-glutamate</KM>
        <KM evidence="2 3">9.23 mM for N-methyl D-aspartate</KM>
        <Vmax evidence="2 3">4.4 umol/min/mg enzyme with D-aspartate as substrate</Vmax>
        <Vmax evidence="2 3">3.03 umol/min/mg enzyme with D-glutamate as substrate</Vmax>
        <Vmax evidence="2 3">4.31 umol/min/mg enzyme with N-methyl D-aspartate as substrate</Vmax>
    </kinetics>
</comment>
<comment type="subcellular location">
    <subcellularLocation>
        <location evidence="6">Cytoplasm</location>
    </subcellularLocation>
</comment>
<comment type="alternative products">
    <event type="alternative splicing"/>
    <isoform>
        <id>Q19564-1</id>
        <name>a</name>
        <sequence type="displayed"/>
    </isoform>
    <isoform>
        <id>Q19564-2</id>
        <name>b</name>
        <sequence type="described" ref="VSP_014356 VSP_014357 VSP_014358 VSP_014359"/>
    </isoform>
</comment>
<comment type="tissue specificity">
    <text evidence="5">Expressed in the intestinal cells, pharyngeal muscles, and body wall muscles in adult hermaphrodites.</text>
</comment>
<comment type="developmental stage">
    <text evidence="5">Expression detected in the intestinal cells from comma-stage embryo to adult stages, and also in the pharyngeal and body wall muscles from larva to adult stages.</text>
</comment>
<comment type="disruption phenotype">
    <text evidence="5">Mutant worms have decreased egg-laying capacity at 20 degrees Celsius and decreased hatching rate and smaller brood size at 25 degrees Celsius. Mutant worms also exhibit decreased fertilization rates but do not show any change in physical appearance.</text>
</comment>
<comment type="similarity">
    <text evidence="6">Belongs to the DAMOX/DASOX family.</text>
</comment>
<proteinExistence type="evidence at protein level"/>
<organism>
    <name type="scientific">Caenorhabditis elegans</name>
    <dbReference type="NCBI Taxonomy" id="6239"/>
    <lineage>
        <taxon>Eukaryota</taxon>
        <taxon>Metazoa</taxon>
        <taxon>Ecdysozoa</taxon>
        <taxon>Nematoda</taxon>
        <taxon>Chromadorea</taxon>
        <taxon>Rhabditida</taxon>
        <taxon>Rhabditina</taxon>
        <taxon>Rhabditomorpha</taxon>
        <taxon>Rhabditoidea</taxon>
        <taxon>Rhabditidae</taxon>
        <taxon>Peloderinae</taxon>
        <taxon>Caenorhabditis</taxon>
    </lineage>
</organism>
<evidence type="ECO:0000250" key="1">
    <source>
        <dbReference type="UniProtKB" id="Q99489"/>
    </source>
</evidence>
<evidence type="ECO:0000269" key="2">
    <source>
    </source>
</evidence>
<evidence type="ECO:0000269" key="3">
    <source>
    </source>
</evidence>
<evidence type="ECO:0000269" key="4">
    <source>
    </source>
</evidence>
<evidence type="ECO:0000269" key="5">
    <source>
    </source>
</evidence>
<evidence type="ECO:0000305" key="6"/>
<name>OXDD2_CAEEL</name>